<comment type="function">
    <text evidence="1">Catalyzes the complicated ring closure reaction between the two acyclic compounds 1-deoxy-D-xylulose-5-phosphate (DXP) and 3-amino-2-oxopropyl phosphate (1-amino-acetone-3-phosphate or AAP) to form pyridoxine 5'-phosphate (PNP) and inorganic phosphate.</text>
</comment>
<comment type="catalytic activity">
    <reaction evidence="1">
        <text>3-amino-2-oxopropyl phosphate + 1-deoxy-D-xylulose 5-phosphate = pyridoxine 5'-phosphate + phosphate + 2 H2O + H(+)</text>
        <dbReference type="Rhea" id="RHEA:15265"/>
        <dbReference type="ChEBI" id="CHEBI:15377"/>
        <dbReference type="ChEBI" id="CHEBI:15378"/>
        <dbReference type="ChEBI" id="CHEBI:43474"/>
        <dbReference type="ChEBI" id="CHEBI:57279"/>
        <dbReference type="ChEBI" id="CHEBI:57792"/>
        <dbReference type="ChEBI" id="CHEBI:58589"/>
        <dbReference type="EC" id="2.6.99.2"/>
    </reaction>
</comment>
<comment type="pathway">
    <text evidence="1">Cofactor biosynthesis; pyridoxine 5'-phosphate biosynthesis; pyridoxine 5'-phosphate from D-erythrose 4-phosphate: step 5/5.</text>
</comment>
<comment type="subunit">
    <text evidence="1">Homooctamer; tetramer of dimers.</text>
</comment>
<comment type="subcellular location">
    <subcellularLocation>
        <location evidence="1">Cytoplasm</location>
    </subcellularLocation>
</comment>
<comment type="similarity">
    <text evidence="1">Belongs to the PNP synthase family.</text>
</comment>
<gene>
    <name evidence="1" type="primary">pdxJ</name>
    <name type="ordered locus">PSPPH_3945</name>
</gene>
<reference key="1">
    <citation type="journal article" date="2005" name="J. Bacteriol.">
        <title>Whole-genome sequence analysis of Pseudomonas syringae pv. phaseolicola 1448A reveals divergence among pathovars in genes involved in virulence and transposition.</title>
        <authorList>
            <person name="Joardar V."/>
            <person name="Lindeberg M."/>
            <person name="Jackson R.W."/>
            <person name="Selengut J."/>
            <person name="Dodson R."/>
            <person name="Brinkac L.M."/>
            <person name="Daugherty S.C."/>
            <person name="DeBoy R.T."/>
            <person name="Durkin A.S."/>
            <person name="Gwinn Giglio M."/>
            <person name="Madupu R."/>
            <person name="Nelson W.C."/>
            <person name="Rosovitz M.J."/>
            <person name="Sullivan S.A."/>
            <person name="Crabtree J."/>
            <person name="Creasy T."/>
            <person name="Davidsen T.M."/>
            <person name="Haft D.H."/>
            <person name="Zafar N."/>
            <person name="Zhou L."/>
            <person name="Halpin R."/>
            <person name="Holley T."/>
            <person name="Khouri H.M."/>
            <person name="Feldblyum T.V."/>
            <person name="White O."/>
            <person name="Fraser C.M."/>
            <person name="Chatterjee A.K."/>
            <person name="Cartinhour S."/>
            <person name="Schneider D."/>
            <person name="Mansfield J.W."/>
            <person name="Collmer A."/>
            <person name="Buell R."/>
        </authorList>
    </citation>
    <scope>NUCLEOTIDE SEQUENCE [LARGE SCALE GENOMIC DNA]</scope>
    <source>
        <strain>1448A / Race 6</strain>
    </source>
</reference>
<sequence length="246" mass="26641">MTQSTRILLGVNIDHVATLRQARGTRYPDPVKAALDAEEAGADGITVHLREDRRHIQERDVLLLKDVLQTRMNFEMGVTEEMLAFAERIRPAHICLVPETRQELTTEGGLDVAGQEARIRSAVERLAKIGCEVSLFIDADERQIAASKRVGAPAIELHTGRYADAQTPTEVAEELQRVADGVAFGLAQGLIVNAGHGLHYHNVEAVAAIKGINELNIGHALVAHALFVGFKAAVAEMKALIVAAAR</sequence>
<evidence type="ECO:0000255" key="1">
    <source>
        <dbReference type="HAMAP-Rule" id="MF_00279"/>
    </source>
</evidence>
<organism>
    <name type="scientific">Pseudomonas savastanoi pv. phaseolicola (strain 1448A / Race 6)</name>
    <name type="common">Pseudomonas syringae pv. phaseolicola (strain 1448A / Race 6)</name>
    <dbReference type="NCBI Taxonomy" id="264730"/>
    <lineage>
        <taxon>Bacteria</taxon>
        <taxon>Pseudomonadati</taxon>
        <taxon>Pseudomonadota</taxon>
        <taxon>Gammaproteobacteria</taxon>
        <taxon>Pseudomonadales</taxon>
        <taxon>Pseudomonadaceae</taxon>
        <taxon>Pseudomonas</taxon>
    </lineage>
</organism>
<feature type="chain" id="PRO_0000231836" description="Pyridoxine 5'-phosphate synthase">
    <location>
        <begin position="1"/>
        <end position="246"/>
    </location>
</feature>
<feature type="active site" description="Proton acceptor" evidence="1">
    <location>
        <position position="48"/>
    </location>
</feature>
<feature type="active site" description="Proton acceptor" evidence="1">
    <location>
        <position position="75"/>
    </location>
</feature>
<feature type="active site" description="Proton donor" evidence="1">
    <location>
        <position position="196"/>
    </location>
</feature>
<feature type="binding site" evidence="1">
    <location>
        <position position="12"/>
    </location>
    <ligand>
        <name>3-amino-2-oxopropyl phosphate</name>
        <dbReference type="ChEBI" id="CHEBI:57279"/>
    </ligand>
</feature>
<feature type="binding site" evidence="1">
    <location>
        <begin position="14"/>
        <end position="15"/>
    </location>
    <ligand>
        <name>1-deoxy-D-xylulose 5-phosphate</name>
        <dbReference type="ChEBI" id="CHEBI:57792"/>
    </ligand>
</feature>
<feature type="binding site" evidence="1">
    <location>
        <position position="23"/>
    </location>
    <ligand>
        <name>3-amino-2-oxopropyl phosphate</name>
        <dbReference type="ChEBI" id="CHEBI:57279"/>
    </ligand>
</feature>
<feature type="binding site" evidence="1">
    <location>
        <position position="50"/>
    </location>
    <ligand>
        <name>1-deoxy-D-xylulose 5-phosphate</name>
        <dbReference type="ChEBI" id="CHEBI:57792"/>
    </ligand>
</feature>
<feature type="binding site" evidence="1">
    <location>
        <position position="55"/>
    </location>
    <ligand>
        <name>1-deoxy-D-xylulose 5-phosphate</name>
        <dbReference type="ChEBI" id="CHEBI:57792"/>
    </ligand>
</feature>
<feature type="binding site" evidence="1">
    <location>
        <position position="105"/>
    </location>
    <ligand>
        <name>1-deoxy-D-xylulose 5-phosphate</name>
        <dbReference type="ChEBI" id="CHEBI:57792"/>
    </ligand>
</feature>
<feature type="binding site" evidence="1">
    <location>
        <position position="197"/>
    </location>
    <ligand>
        <name>3-amino-2-oxopropyl phosphate</name>
        <dbReference type="ChEBI" id="CHEBI:57279"/>
    </ligand>
</feature>
<feature type="binding site" evidence="1">
    <location>
        <begin position="218"/>
        <end position="219"/>
    </location>
    <ligand>
        <name>3-amino-2-oxopropyl phosphate</name>
        <dbReference type="ChEBI" id="CHEBI:57279"/>
    </ligand>
</feature>
<feature type="site" description="Transition state stabilizer" evidence="1">
    <location>
        <position position="156"/>
    </location>
</feature>
<keyword id="KW-0963">Cytoplasm</keyword>
<keyword id="KW-0664">Pyridoxine biosynthesis</keyword>
<keyword id="KW-0808">Transferase</keyword>
<accession>Q48EV6</accession>
<proteinExistence type="inferred from homology"/>
<name>PDXJ_PSE14</name>
<protein>
    <recommendedName>
        <fullName evidence="1">Pyridoxine 5'-phosphate synthase</fullName>
        <shortName evidence="1">PNP synthase</shortName>
        <ecNumber evidence="1">2.6.99.2</ecNumber>
    </recommendedName>
</protein>
<dbReference type="EC" id="2.6.99.2" evidence="1"/>
<dbReference type="EMBL" id="CP000058">
    <property type="protein sequence ID" value="AAZ33669.1"/>
    <property type="molecule type" value="Genomic_DNA"/>
</dbReference>
<dbReference type="RefSeq" id="WP_004664057.1">
    <property type="nucleotide sequence ID" value="NC_005773.3"/>
</dbReference>
<dbReference type="SMR" id="Q48EV6"/>
<dbReference type="KEGG" id="psp:PSPPH_3945"/>
<dbReference type="eggNOG" id="COG0854">
    <property type="taxonomic scope" value="Bacteria"/>
</dbReference>
<dbReference type="HOGENOM" id="CLU_074563_0_0_6"/>
<dbReference type="UniPathway" id="UPA00244">
    <property type="reaction ID" value="UER00313"/>
</dbReference>
<dbReference type="Proteomes" id="UP000000551">
    <property type="component" value="Chromosome"/>
</dbReference>
<dbReference type="GO" id="GO:0005829">
    <property type="term" value="C:cytosol"/>
    <property type="evidence" value="ECO:0007669"/>
    <property type="project" value="TreeGrafter"/>
</dbReference>
<dbReference type="GO" id="GO:0033856">
    <property type="term" value="F:pyridoxine 5'-phosphate synthase activity"/>
    <property type="evidence" value="ECO:0007669"/>
    <property type="project" value="UniProtKB-EC"/>
</dbReference>
<dbReference type="GO" id="GO:0008615">
    <property type="term" value="P:pyridoxine biosynthetic process"/>
    <property type="evidence" value="ECO:0007669"/>
    <property type="project" value="UniProtKB-UniRule"/>
</dbReference>
<dbReference type="CDD" id="cd00003">
    <property type="entry name" value="PNPsynthase"/>
    <property type="match status" value="1"/>
</dbReference>
<dbReference type="FunFam" id="3.20.20.70:FF:000042">
    <property type="entry name" value="Pyridoxine 5'-phosphate synthase"/>
    <property type="match status" value="1"/>
</dbReference>
<dbReference type="Gene3D" id="3.20.20.70">
    <property type="entry name" value="Aldolase class I"/>
    <property type="match status" value="1"/>
</dbReference>
<dbReference type="HAMAP" id="MF_00279">
    <property type="entry name" value="PdxJ"/>
    <property type="match status" value="1"/>
</dbReference>
<dbReference type="InterPro" id="IPR013785">
    <property type="entry name" value="Aldolase_TIM"/>
</dbReference>
<dbReference type="InterPro" id="IPR004569">
    <property type="entry name" value="PyrdxlP_synth_PdxJ"/>
</dbReference>
<dbReference type="InterPro" id="IPR036130">
    <property type="entry name" value="Pyridoxine-5'_phos_synth"/>
</dbReference>
<dbReference type="NCBIfam" id="TIGR00559">
    <property type="entry name" value="pdxJ"/>
    <property type="match status" value="1"/>
</dbReference>
<dbReference type="NCBIfam" id="NF003623">
    <property type="entry name" value="PRK05265.1-1"/>
    <property type="match status" value="1"/>
</dbReference>
<dbReference type="NCBIfam" id="NF003625">
    <property type="entry name" value="PRK05265.1-3"/>
    <property type="match status" value="1"/>
</dbReference>
<dbReference type="NCBIfam" id="NF003627">
    <property type="entry name" value="PRK05265.1-5"/>
    <property type="match status" value="1"/>
</dbReference>
<dbReference type="PANTHER" id="PTHR30456">
    <property type="entry name" value="PYRIDOXINE 5'-PHOSPHATE SYNTHASE"/>
    <property type="match status" value="1"/>
</dbReference>
<dbReference type="PANTHER" id="PTHR30456:SF0">
    <property type="entry name" value="PYRIDOXINE 5'-PHOSPHATE SYNTHASE"/>
    <property type="match status" value="1"/>
</dbReference>
<dbReference type="Pfam" id="PF03740">
    <property type="entry name" value="PdxJ"/>
    <property type="match status" value="1"/>
</dbReference>
<dbReference type="SUPFAM" id="SSF63892">
    <property type="entry name" value="Pyridoxine 5'-phosphate synthase"/>
    <property type="match status" value="1"/>
</dbReference>